<sequence length="260" mass="28695">MVLIRVLANLLILQLSYAQKSSELIIGGDECNINEHRFLVALYTFRSRRFHCGGTLINQEWVLSAARCDRKNIRIKLGMHSTNVTNEDVQTRVPKEKFFCLSSKTYTKWNKDIMLIRLKRPVNNSTHIAPVSLPSNPPSLGSVCRVMGWGTISATKETHPDVPHCANINILDYSVCRAAYARLPATSRTLCAGILEGGKDTCHGDSGGPLICNGQVQGIVSWGGHPCGQPRKPGLYTKVFDHLDWIKSIIAGNKDATCPP</sequence>
<comment type="function">
    <text evidence="4">Snake venom serine protease homolog that may act in the hemostasis system of the prey.</text>
</comment>
<comment type="subcellular location">
    <subcellularLocation>
        <location evidence="5">Secreted</location>
    </subcellularLocation>
</comment>
<comment type="tissue specificity">
    <text evidence="5">Expressed by the venom gland.</text>
</comment>
<comment type="similarity">
    <text evidence="4">Belongs to the peptidase S1 family. Snake venom subfamily.</text>
</comment>
<comment type="caution">
    <text evidence="4">Arg-67 is present instead of the conserved His which is expected to be an active site residue.</text>
</comment>
<feature type="signal peptide" evidence="1">
    <location>
        <begin position="1"/>
        <end position="18"/>
    </location>
</feature>
<feature type="propeptide" id="PRO_0000028393" evidence="1">
    <location>
        <begin position="19"/>
        <end position="24"/>
    </location>
</feature>
<feature type="chain" id="PRO_0000028394" description="Snake venom serine protease homolog 2A">
    <location>
        <begin position="25"/>
        <end position="260"/>
    </location>
</feature>
<feature type="domain" description="Peptidase S1" evidence="3">
    <location>
        <begin position="25"/>
        <end position="251"/>
    </location>
</feature>
<feature type="glycosylation site" description="N-linked (GlcNAc...) asparagine" evidence="2">
    <location>
        <position position="83"/>
    </location>
</feature>
<feature type="glycosylation site" description="N-linked (GlcNAc...) asparagine" evidence="2">
    <location>
        <position position="123"/>
    </location>
</feature>
<feature type="glycosylation site" description="N-linked (GlcNAc...) asparagine" evidence="2">
    <location>
        <position position="124"/>
    </location>
</feature>
<feature type="disulfide bond" evidence="3">
    <location>
        <begin position="31"/>
        <end position="165"/>
    </location>
</feature>
<feature type="disulfide bond" evidence="3">
    <location>
        <begin position="52"/>
        <end position="68"/>
    </location>
</feature>
<feature type="disulfide bond" evidence="3">
    <location>
        <begin position="100"/>
        <end position="258"/>
    </location>
</feature>
<feature type="disulfide bond" evidence="3">
    <location>
        <begin position="144"/>
        <end position="212"/>
    </location>
</feature>
<feature type="disulfide bond" evidence="3">
    <location>
        <begin position="176"/>
        <end position="191"/>
    </location>
</feature>
<feature type="disulfide bond" evidence="3">
    <location>
        <begin position="202"/>
        <end position="227"/>
    </location>
</feature>
<keyword id="KW-1015">Disulfide bond</keyword>
<keyword id="KW-0325">Glycoprotein</keyword>
<keyword id="KW-1199">Hemostasis impairing toxin</keyword>
<keyword id="KW-0964">Secreted</keyword>
<keyword id="KW-0721">Serine protease homolog</keyword>
<keyword id="KW-0732">Signal</keyword>
<keyword id="KW-0800">Toxin</keyword>
<accession>O13060</accession>
<gene>
    <name type="primary">TLG2A</name>
</gene>
<protein>
    <recommendedName>
        <fullName>Snake venom serine protease homolog 2A</fullName>
        <shortName>SVSP 2A</shortName>
    </recommendedName>
    <alternativeName>
        <fullName>Serine proteinase-like protein 2A</fullName>
    </alternativeName>
</protein>
<dbReference type="EMBL" id="D67082">
    <property type="protein sequence ID" value="BAA19980.1"/>
    <property type="molecule type" value="mRNA"/>
</dbReference>
<dbReference type="SMR" id="O13060"/>
<dbReference type="GlyCosmos" id="O13060">
    <property type="glycosylation" value="3 sites, No reported glycans"/>
</dbReference>
<dbReference type="GO" id="GO:0005576">
    <property type="term" value="C:extracellular region"/>
    <property type="evidence" value="ECO:0007669"/>
    <property type="project" value="UniProtKB-SubCell"/>
</dbReference>
<dbReference type="GO" id="GO:0030141">
    <property type="term" value="C:secretory granule"/>
    <property type="evidence" value="ECO:0007669"/>
    <property type="project" value="TreeGrafter"/>
</dbReference>
<dbReference type="GO" id="GO:0004252">
    <property type="term" value="F:serine-type endopeptidase activity"/>
    <property type="evidence" value="ECO:0007669"/>
    <property type="project" value="InterPro"/>
</dbReference>
<dbReference type="GO" id="GO:0090729">
    <property type="term" value="F:toxin activity"/>
    <property type="evidence" value="ECO:0007669"/>
    <property type="project" value="UniProtKB-KW"/>
</dbReference>
<dbReference type="GO" id="GO:0006508">
    <property type="term" value="P:proteolysis"/>
    <property type="evidence" value="ECO:0007669"/>
    <property type="project" value="InterPro"/>
</dbReference>
<dbReference type="CDD" id="cd00190">
    <property type="entry name" value="Tryp_SPc"/>
    <property type="match status" value="1"/>
</dbReference>
<dbReference type="FunFam" id="2.40.10.10:FF:000158">
    <property type="entry name" value="Thrombin-like enzyme saxthrombin"/>
    <property type="match status" value="1"/>
</dbReference>
<dbReference type="FunFam" id="2.40.10.10:FF:000153">
    <property type="entry name" value="Venom plasminogen activator TSV-PA"/>
    <property type="match status" value="1"/>
</dbReference>
<dbReference type="Gene3D" id="2.40.10.10">
    <property type="entry name" value="Trypsin-like serine proteases"/>
    <property type="match status" value="2"/>
</dbReference>
<dbReference type="InterPro" id="IPR009003">
    <property type="entry name" value="Peptidase_S1_PA"/>
</dbReference>
<dbReference type="InterPro" id="IPR043504">
    <property type="entry name" value="Peptidase_S1_PA_chymotrypsin"/>
</dbReference>
<dbReference type="InterPro" id="IPR001314">
    <property type="entry name" value="Peptidase_S1A"/>
</dbReference>
<dbReference type="InterPro" id="IPR001254">
    <property type="entry name" value="Trypsin_dom"/>
</dbReference>
<dbReference type="InterPro" id="IPR033116">
    <property type="entry name" value="TRYPSIN_SER"/>
</dbReference>
<dbReference type="PANTHER" id="PTHR24271:SF47">
    <property type="entry name" value="KALLIKREIN-1"/>
    <property type="match status" value="1"/>
</dbReference>
<dbReference type="PANTHER" id="PTHR24271">
    <property type="entry name" value="KALLIKREIN-RELATED"/>
    <property type="match status" value="1"/>
</dbReference>
<dbReference type="Pfam" id="PF00089">
    <property type="entry name" value="Trypsin"/>
    <property type="match status" value="1"/>
</dbReference>
<dbReference type="PRINTS" id="PR00722">
    <property type="entry name" value="CHYMOTRYPSIN"/>
</dbReference>
<dbReference type="SMART" id="SM00020">
    <property type="entry name" value="Tryp_SPc"/>
    <property type="match status" value="1"/>
</dbReference>
<dbReference type="SUPFAM" id="SSF50494">
    <property type="entry name" value="Trypsin-like serine proteases"/>
    <property type="match status" value="1"/>
</dbReference>
<dbReference type="PROSITE" id="PS50240">
    <property type="entry name" value="TRYPSIN_DOM"/>
    <property type="match status" value="1"/>
</dbReference>
<dbReference type="PROSITE" id="PS00135">
    <property type="entry name" value="TRYPSIN_SER"/>
    <property type="match status" value="1"/>
</dbReference>
<reference key="1">
    <citation type="journal article" date="1996" name="FEBS Lett.">
        <title>Accelerated evolution of crotalinae snake venom gland serine proteases.</title>
        <authorList>
            <person name="Deshimaru M."/>
            <person name="Ogawa T."/>
            <person name="Nakashima K."/>
            <person name="Nobuhisa I."/>
            <person name="Chijiwa T."/>
            <person name="Shimohigashi Y."/>
            <person name="Fukumaki Y."/>
            <person name="Niwa M."/>
            <person name="Yamashina I."/>
            <person name="Hattori S."/>
            <person name="Ohno M."/>
        </authorList>
    </citation>
    <scope>NUCLEOTIDE SEQUENCE [MRNA]</scope>
    <source>
        <tissue>Venom gland</tissue>
    </source>
</reference>
<evidence type="ECO:0000250" key="1"/>
<evidence type="ECO:0000255" key="2"/>
<evidence type="ECO:0000255" key="3">
    <source>
        <dbReference type="PROSITE-ProRule" id="PRU00274"/>
    </source>
</evidence>
<evidence type="ECO:0000305" key="4"/>
<evidence type="ECO:0000305" key="5">
    <source>
    </source>
</evidence>
<name>VSPHA_CRAGM</name>
<proteinExistence type="evidence at transcript level"/>
<organism>
    <name type="scientific">Craspedocephalus gramineus</name>
    <name type="common">Bamboo pit viper</name>
    <name type="synonym">Trimeresurus gramineus</name>
    <dbReference type="NCBI Taxonomy" id="8767"/>
    <lineage>
        <taxon>Eukaryota</taxon>
        <taxon>Metazoa</taxon>
        <taxon>Chordata</taxon>
        <taxon>Craniata</taxon>
        <taxon>Vertebrata</taxon>
        <taxon>Euteleostomi</taxon>
        <taxon>Lepidosauria</taxon>
        <taxon>Squamata</taxon>
        <taxon>Bifurcata</taxon>
        <taxon>Unidentata</taxon>
        <taxon>Episquamata</taxon>
        <taxon>Toxicofera</taxon>
        <taxon>Serpentes</taxon>
        <taxon>Colubroidea</taxon>
        <taxon>Viperidae</taxon>
        <taxon>Crotalinae</taxon>
        <taxon>Craspedocephalus</taxon>
    </lineage>
</organism>